<gene>
    <name evidence="2" type="primary">TBXT</name>
    <name type="synonym">BRA-1</name>
</gene>
<accession>Q17134</accession>
<feature type="chain" id="PRO_0000184419" description="T-box transcription factor T homolog 1">
    <location>
        <begin position="1"/>
        <end position="448"/>
    </location>
</feature>
<feature type="DNA-binding region" description="T-box" evidence="3">
    <location>
        <begin position="54"/>
        <end position="224"/>
    </location>
</feature>
<feature type="region of interest" description="Disordered" evidence="4">
    <location>
        <begin position="290"/>
        <end position="312"/>
    </location>
</feature>
<feature type="region of interest" description="Disordered" evidence="4">
    <location>
        <begin position="401"/>
        <end position="448"/>
    </location>
</feature>
<feature type="compositionally biased region" description="Polar residues" evidence="4">
    <location>
        <begin position="417"/>
        <end position="442"/>
    </location>
</feature>
<keyword id="KW-0217">Developmental protein</keyword>
<keyword id="KW-0238">DNA-binding</keyword>
<keyword id="KW-0539">Nucleus</keyword>
<keyword id="KW-1185">Reference proteome</keyword>
<keyword id="KW-0804">Transcription</keyword>
<keyword id="KW-0805">Transcription regulation</keyword>
<reference key="1">
    <citation type="journal article" date="1995" name="Development">
        <title>Conservation of Brachyury (T) genes in amphioxus and vertebrates: developmental and evolutionary implications.</title>
        <authorList>
            <person name="Holland P.W.H."/>
            <person name="Koschorz B."/>
            <person name="Holland L.Z."/>
            <person name="Herrmann B.G."/>
        </authorList>
    </citation>
    <scope>NUCLEOTIDE SEQUENCE [MRNA]</scope>
    <source>
        <tissue>Larva</tissue>
    </source>
</reference>
<comment type="function">
    <text evidence="1">Involved in the transcriptional regulation of genes required for mesoderm formation and differentiation.</text>
</comment>
<comment type="subcellular location">
    <subcellularLocation>
        <location evidence="3">Nucleus</location>
    </subcellularLocation>
</comment>
<comment type="developmental stage">
    <text>First detected in the 10 hours gastrula around the blastopore. In later stages of gastrulation and early neuralization, expressed in posterior mesoderm and the notochord where expression continues at least until swimming larval stage.</text>
</comment>
<evidence type="ECO:0000250" key="1"/>
<evidence type="ECO:0000250" key="2">
    <source>
        <dbReference type="UniProtKB" id="O15178"/>
    </source>
</evidence>
<evidence type="ECO:0000255" key="3">
    <source>
        <dbReference type="PROSITE-ProRule" id="PRU00201"/>
    </source>
</evidence>
<evidence type="ECO:0000256" key="4">
    <source>
        <dbReference type="SAM" id="MobiDB-lite"/>
    </source>
</evidence>
<evidence type="ECO:0000305" key="5"/>
<sequence>MSSAETMKQPTAASPDQFSVSHLLSAVESEISAGSEKGDPTERDLKITLEEKPLWDKFNALTNEMIVTKNGRRMFPVLKVNVSGLDPNAMYSFLLDFTAADNHRWKYVNGEWVPGGKPEPSVPSCVYIHPDSPNFGAHWMKSPVSFSKVKLTNKLNGGGQIMLNSLHKYEPRLHIIKVGGPDNQRMVSTHTFPETQFIAVTAYQNEEITALKIKYNPFAKAFLDAKERSDGKDGMEDLQDQPQYSQLGGWFLPGTGPICPPPNPHQFAPSLGLPSHGCDRYSTLRNHRSAPYPHPYQRSSPPTNYGHDTAASLPMMPTHDNWSGLPVSTHNMLSMSAMPHTTTSTHAQYPNLWSVSNNNLTPTTHAQTHMSGTMGTGLPHQFLRTTAPAPYHSIPTCTVPTTASSSPVYHDSHEVSSTDSGYGHSTTPPAPQTRITSNNWSPMTPPSL</sequence>
<protein>
    <recommendedName>
        <fullName evidence="5">T-box transcription factor T homolog 1</fullName>
    </recommendedName>
    <alternativeName>
        <fullName>AmBra-1</fullName>
    </alternativeName>
    <alternativeName>
        <fullName evidence="5">Brachyury protein homolog 1</fullName>
    </alternativeName>
</protein>
<dbReference type="EMBL" id="X91903">
    <property type="protein sequence ID" value="CAA62999.1"/>
    <property type="molecule type" value="mRNA"/>
</dbReference>
<dbReference type="SMR" id="Q17134"/>
<dbReference type="eggNOG" id="KOG3585">
    <property type="taxonomic scope" value="Eukaryota"/>
</dbReference>
<dbReference type="Proteomes" id="UP000001554">
    <property type="component" value="Unplaced"/>
</dbReference>
<dbReference type="GO" id="GO:0000785">
    <property type="term" value="C:chromatin"/>
    <property type="evidence" value="ECO:0000318"/>
    <property type="project" value="GO_Central"/>
</dbReference>
<dbReference type="GO" id="GO:0005634">
    <property type="term" value="C:nucleus"/>
    <property type="evidence" value="ECO:0000318"/>
    <property type="project" value="GO_Central"/>
</dbReference>
<dbReference type="GO" id="GO:0000981">
    <property type="term" value="F:DNA-binding transcription factor activity, RNA polymerase II-specific"/>
    <property type="evidence" value="ECO:0000318"/>
    <property type="project" value="GO_Central"/>
</dbReference>
<dbReference type="GO" id="GO:0000978">
    <property type="term" value="F:RNA polymerase II cis-regulatory region sequence-specific DNA binding"/>
    <property type="evidence" value="ECO:0000318"/>
    <property type="project" value="GO_Central"/>
</dbReference>
<dbReference type="GO" id="GO:0001708">
    <property type="term" value="P:cell fate specification"/>
    <property type="evidence" value="ECO:0000318"/>
    <property type="project" value="GO_Central"/>
</dbReference>
<dbReference type="GO" id="GO:0003007">
    <property type="term" value="P:heart morphogenesis"/>
    <property type="evidence" value="ECO:0000318"/>
    <property type="project" value="GO_Central"/>
</dbReference>
<dbReference type="GO" id="GO:0001707">
    <property type="term" value="P:mesoderm formation"/>
    <property type="evidence" value="ECO:0000318"/>
    <property type="project" value="GO_Central"/>
</dbReference>
<dbReference type="GO" id="GO:0045893">
    <property type="term" value="P:positive regulation of DNA-templated transcription"/>
    <property type="evidence" value="ECO:0007669"/>
    <property type="project" value="InterPro"/>
</dbReference>
<dbReference type="GO" id="GO:0006357">
    <property type="term" value="P:regulation of transcription by RNA polymerase II"/>
    <property type="evidence" value="ECO:0000318"/>
    <property type="project" value="GO_Central"/>
</dbReference>
<dbReference type="CDD" id="cd20192">
    <property type="entry name" value="T-box_TBXT_TBX19-like"/>
    <property type="match status" value="1"/>
</dbReference>
<dbReference type="FunFam" id="2.60.40.820:FF:000002">
    <property type="entry name" value="T-box transcription factor Brachyury"/>
    <property type="match status" value="1"/>
</dbReference>
<dbReference type="Gene3D" id="2.60.40.820">
    <property type="entry name" value="Transcription factor, T-box"/>
    <property type="match status" value="1"/>
</dbReference>
<dbReference type="InterPro" id="IPR008967">
    <property type="entry name" value="p53-like_TF_DNA-bd_sf"/>
</dbReference>
<dbReference type="InterPro" id="IPR046360">
    <property type="entry name" value="T-box_DNA-bd"/>
</dbReference>
<dbReference type="InterPro" id="IPR036960">
    <property type="entry name" value="T-box_sf"/>
</dbReference>
<dbReference type="InterPro" id="IPR002070">
    <property type="entry name" value="TF_Brachyury"/>
</dbReference>
<dbReference type="InterPro" id="IPR001699">
    <property type="entry name" value="TF_T-box"/>
</dbReference>
<dbReference type="InterPro" id="IPR018186">
    <property type="entry name" value="TF_T-box_CS"/>
</dbReference>
<dbReference type="PANTHER" id="PTHR11267">
    <property type="entry name" value="T-BOX PROTEIN-RELATED"/>
    <property type="match status" value="1"/>
</dbReference>
<dbReference type="PANTHER" id="PTHR11267:SF106">
    <property type="entry name" value="T-RELATED PROTEIN"/>
    <property type="match status" value="1"/>
</dbReference>
<dbReference type="Pfam" id="PF00907">
    <property type="entry name" value="T-box"/>
    <property type="match status" value="1"/>
</dbReference>
<dbReference type="PRINTS" id="PR00938">
    <property type="entry name" value="BRACHYURY"/>
</dbReference>
<dbReference type="PRINTS" id="PR00937">
    <property type="entry name" value="TBOX"/>
</dbReference>
<dbReference type="SMART" id="SM00425">
    <property type="entry name" value="TBOX"/>
    <property type="match status" value="1"/>
</dbReference>
<dbReference type="SUPFAM" id="SSF49417">
    <property type="entry name" value="p53-like transcription factors"/>
    <property type="match status" value="1"/>
</dbReference>
<dbReference type="PROSITE" id="PS01283">
    <property type="entry name" value="TBOX_1"/>
    <property type="match status" value="1"/>
</dbReference>
<dbReference type="PROSITE" id="PS01264">
    <property type="entry name" value="TBOX_2"/>
    <property type="match status" value="1"/>
</dbReference>
<dbReference type="PROSITE" id="PS50252">
    <property type="entry name" value="TBOX_3"/>
    <property type="match status" value="1"/>
</dbReference>
<name>TBXT1_BRAFL</name>
<organism>
    <name type="scientific">Branchiostoma floridae</name>
    <name type="common">Florida lancelet</name>
    <name type="synonym">Amphioxus</name>
    <dbReference type="NCBI Taxonomy" id="7739"/>
    <lineage>
        <taxon>Eukaryota</taxon>
        <taxon>Metazoa</taxon>
        <taxon>Chordata</taxon>
        <taxon>Cephalochordata</taxon>
        <taxon>Leptocardii</taxon>
        <taxon>Amphioxiformes</taxon>
        <taxon>Branchiostomatidae</taxon>
        <taxon>Branchiostoma</taxon>
    </lineage>
</organism>
<proteinExistence type="evidence at transcript level"/>